<dbReference type="EMBL" id="M59825">
    <property type="protein sequence ID" value="AAA26414.1"/>
    <property type="molecule type" value="Genomic_DNA"/>
</dbReference>
<dbReference type="PIR" id="D37141">
    <property type="entry name" value="D37141"/>
</dbReference>
<dbReference type="RefSeq" id="WP_011205802.1">
    <property type="nucleotide sequence ID" value="NZ_VMTS01000064.1"/>
</dbReference>
<dbReference type="SMR" id="P22996"/>
<dbReference type="CD-CODE" id="54B206F5">
    <property type="entry name" value="Synthetic Condensate 000335"/>
</dbReference>
<dbReference type="GO" id="GO:0003677">
    <property type="term" value="F:DNA binding"/>
    <property type="evidence" value="ECO:0007669"/>
    <property type="project" value="UniProtKB-KW"/>
</dbReference>
<dbReference type="GO" id="GO:0000150">
    <property type="term" value="F:DNA strand exchange activity"/>
    <property type="evidence" value="ECO:0007669"/>
    <property type="project" value="InterPro"/>
</dbReference>
<dbReference type="GO" id="GO:0015074">
    <property type="term" value="P:DNA integration"/>
    <property type="evidence" value="ECO:0007669"/>
    <property type="project" value="UniProtKB-KW"/>
</dbReference>
<dbReference type="GO" id="GO:0030541">
    <property type="term" value="P:plasmid partitioning"/>
    <property type="evidence" value="ECO:0007669"/>
    <property type="project" value="UniProtKB-KW"/>
</dbReference>
<dbReference type="CDD" id="cd03767">
    <property type="entry name" value="SR_Res_par"/>
    <property type="match status" value="1"/>
</dbReference>
<dbReference type="Gene3D" id="3.40.50.1390">
    <property type="entry name" value="Resolvase, N-terminal catalytic domain"/>
    <property type="match status" value="1"/>
</dbReference>
<dbReference type="InterPro" id="IPR006118">
    <property type="entry name" value="Recombinase_CS"/>
</dbReference>
<dbReference type="InterPro" id="IPR006119">
    <property type="entry name" value="Resolv_N"/>
</dbReference>
<dbReference type="InterPro" id="IPR036162">
    <property type="entry name" value="Resolvase-like_N_sf"/>
</dbReference>
<dbReference type="InterPro" id="IPR006120">
    <property type="entry name" value="Resolvase_HTH_dom"/>
</dbReference>
<dbReference type="InterPro" id="IPR050639">
    <property type="entry name" value="SSR_resolvase"/>
</dbReference>
<dbReference type="PANTHER" id="PTHR30461">
    <property type="entry name" value="DNA-INVERTASE FROM LAMBDOID PROPHAGE"/>
    <property type="match status" value="1"/>
</dbReference>
<dbReference type="PANTHER" id="PTHR30461:SF26">
    <property type="entry name" value="RESOLVASE HOMOLOG YNEB"/>
    <property type="match status" value="1"/>
</dbReference>
<dbReference type="Pfam" id="PF02796">
    <property type="entry name" value="HTH_7"/>
    <property type="match status" value="1"/>
</dbReference>
<dbReference type="Pfam" id="PF00239">
    <property type="entry name" value="Resolvase"/>
    <property type="match status" value="1"/>
</dbReference>
<dbReference type="SMART" id="SM00857">
    <property type="entry name" value="Resolvase"/>
    <property type="match status" value="1"/>
</dbReference>
<dbReference type="SUPFAM" id="SSF53041">
    <property type="entry name" value="Resolvase-like"/>
    <property type="match status" value="1"/>
</dbReference>
<dbReference type="PROSITE" id="PS00397">
    <property type="entry name" value="RECOMBINASES_1"/>
    <property type="match status" value="1"/>
</dbReference>
<dbReference type="PROSITE" id="PS00398">
    <property type="entry name" value="RECOMBINASES_2"/>
    <property type="match status" value="1"/>
</dbReference>
<dbReference type="PROSITE" id="PS51736">
    <property type="entry name" value="RECOMBINASES_3"/>
    <property type="match status" value="1"/>
</dbReference>
<protein>
    <recommendedName>
        <fullName>Resolvase</fullName>
    </recommendedName>
</protein>
<gene>
    <name type="primary">parA</name>
</gene>
<evidence type="ECO:0000255" key="1">
    <source>
        <dbReference type="PROSITE-ProRule" id="PRU01072"/>
    </source>
</evidence>
<evidence type="ECO:0000305" key="2"/>
<proteinExistence type="inferred from homology"/>
<organism>
    <name type="scientific">Escherichia coli</name>
    <dbReference type="NCBI Taxonomy" id="562"/>
    <lineage>
        <taxon>Bacteria</taxon>
        <taxon>Pseudomonadati</taxon>
        <taxon>Pseudomonadota</taxon>
        <taxon>Gammaproteobacteria</taxon>
        <taxon>Enterobacterales</taxon>
        <taxon>Enterobacteriaceae</taxon>
        <taxon>Escherichia</taxon>
    </lineage>
</organism>
<geneLocation type="plasmid">
    <name>IncP-alpha RP4</name>
</geneLocation>
<sequence length="219" mass="24161">MATREQQPEGRRLKVARIYLRASTDEQNLERQESLVAATRAAGYYVAGIYREKASGARADRPELLRMIADLQPGEVVVAEKIDRISRLPLAEAERLVASIRAKGAKLAVPGVVDLSELAAEANGVAKIVLESVQDMLLKLALQMARDDYEDRRERQRQGVQLAKAAGRYTGRKRDAGMHDRIITLRSGGSSIAKTAKLVGCSPSQVKRVWAAWNAQQQK</sequence>
<keyword id="KW-0229">DNA integration</keyword>
<keyword id="KW-0233">DNA recombination</keyword>
<keyword id="KW-0238">DNA-binding</keyword>
<keyword id="KW-0614">Plasmid</keyword>
<keyword id="KW-0616">Plasmid partition</keyword>
<accession>P22996</accession>
<name>PARA4_ECOLX</name>
<reference key="1">
    <citation type="journal article" date="1990" name="J. Bacteriol.">
        <title>Partitioning of broad-host-range plasmid RP4 is a complex system involving site-specific recombination.</title>
        <authorList>
            <person name="Gerlitz M."/>
            <person name="Hrabak O."/>
            <person name="Schwab H."/>
        </authorList>
    </citation>
    <scope>NUCLEOTIDE SEQUENCE [GENOMIC DNA]</scope>
</reference>
<feature type="chain" id="PRO_0000196384" description="Resolvase">
    <location>
        <begin position="1"/>
        <end position="219"/>
    </location>
</feature>
<feature type="domain" description="Resolvase/invertase-type recombinase catalytic" evidence="1">
    <location>
        <begin position="15"/>
        <end position="159"/>
    </location>
</feature>
<feature type="active site" description="O-(5'-phospho-DNA)-serine intermediate" evidence="1">
    <location>
        <position position="23"/>
    </location>
</feature>
<comment type="function">
    <text>Involved in plasmid partition.</text>
</comment>
<comment type="similarity">
    <text evidence="2">Belongs to the site-specific recombinase resolvase family.</text>
</comment>